<proteinExistence type="evidence at protein level"/>
<accession>Q8I948</accession>
<reference evidence="4 5" key="1">
    <citation type="journal article" date="2003" name="Dev. Comp. Immunol.">
        <title>Acanthoscurrin: a novel glycine-rich antimicrobial peptide constitutively expressed in the hemocytes of the spider Acanthoscurria gomesiana.</title>
        <authorList>
            <person name="Lorenzini D.M."/>
            <person name="da Silva P.I. Jr."/>
            <person name="Fogaca A.C."/>
            <person name="Bulet P."/>
            <person name="Daffre S."/>
        </authorList>
    </citation>
    <scope>NUCLEOTIDE SEQUENCE [MRNA]</scope>
    <scope>PROTEIN SEQUENCE OF 24-86</scope>
    <scope>FUNCTION</scope>
    <scope>SUBCELLULAR LOCATION</scope>
    <scope>TISSUE SPECIFICITY</scope>
    <scope>MASS SPECTROMETRY</scope>
    <scope>AMIDATION AT LYS-155</scope>
    <source>
        <tissue evidence="2">Hemocyte</tissue>
    </source>
</reference>
<name>ACN1_ACAGO</name>
<gene>
    <name evidence="5" type="primary">acantho1</name>
</gene>
<dbReference type="EMBL" id="AJ508925">
    <property type="protein sequence ID" value="CAD48603.1"/>
    <property type="molecule type" value="mRNA"/>
</dbReference>
<dbReference type="GO" id="GO:0005576">
    <property type="term" value="C:extracellular region"/>
    <property type="evidence" value="ECO:0000314"/>
    <property type="project" value="UniProtKB"/>
</dbReference>
<dbReference type="GO" id="GO:0019731">
    <property type="term" value="P:antibacterial humoral response"/>
    <property type="evidence" value="ECO:0000314"/>
    <property type="project" value="UniProtKB"/>
</dbReference>
<dbReference type="GO" id="GO:0019732">
    <property type="term" value="P:antifungal humoral response"/>
    <property type="evidence" value="ECO:0000314"/>
    <property type="project" value="UniProtKB"/>
</dbReference>
<dbReference type="GO" id="GO:0045087">
    <property type="term" value="P:innate immune response"/>
    <property type="evidence" value="ECO:0007669"/>
    <property type="project" value="UniProtKB-KW"/>
</dbReference>
<dbReference type="GO" id="GO:0031640">
    <property type="term" value="P:killing of cells of another organism"/>
    <property type="evidence" value="ECO:0007669"/>
    <property type="project" value="UniProtKB-KW"/>
</dbReference>
<dbReference type="PRINTS" id="PR01228">
    <property type="entry name" value="EGGSHELL"/>
</dbReference>
<organism>
    <name type="scientific">Acanthoscurria gomesiana</name>
    <name type="common">Tarantula spider</name>
    <name type="synonym">Phormictopus pheopygus</name>
    <dbReference type="NCBI Taxonomy" id="115339"/>
    <lineage>
        <taxon>Eukaryota</taxon>
        <taxon>Metazoa</taxon>
        <taxon>Ecdysozoa</taxon>
        <taxon>Arthropoda</taxon>
        <taxon>Chelicerata</taxon>
        <taxon>Arachnida</taxon>
        <taxon>Araneae</taxon>
        <taxon>Mygalomorphae</taxon>
        <taxon>Theraphosidae</taxon>
        <taxon>Acanthoscurria</taxon>
    </lineage>
</organism>
<feature type="signal peptide" evidence="1 2">
    <location>
        <begin position="1"/>
        <end position="23"/>
    </location>
</feature>
<feature type="peptide" id="PRO_0000020623" description="Acanthoscurrin-1">
    <location>
        <begin position="24"/>
        <end position="155"/>
    </location>
</feature>
<feature type="modified residue" description="Lysine amide" evidence="2">
    <location>
        <position position="155"/>
    </location>
</feature>
<evidence type="ECO:0000255" key="1"/>
<evidence type="ECO:0000269" key="2">
    <source>
    </source>
</evidence>
<evidence type="ECO:0000303" key="3">
    <source>
    </source>
</evidence>
<evidence type="ECO:0000305" key="4"/>
<evidence type="ECO:0000312" key="5">
    <source>
        <dbReference type="EMBL" id="CAD48603.1"/>
    </source>
</evidence>
<keyword id="KW-0027">Amidation</keyword>
<keyword id="KW-0044">Antibiotic</keyword>
<keyword id="KW-0929">Antimicrobial</keyword>
<keyword id="KW-0903">Direct protein sequencing</keyword>
<keyword id="KW-0295">Fungicide</keyword>
<keyword id="KW-0391">Immunity</keyword>
<keyword id="KW-0399">Innate immunity</keyword>
<keyword id="KW-0964">Secreted</keyword>
<keyword id="KW-0732">Signal</keyword>
<sequence length="156" mass="12749">MAFRMKLVVCIVLLSTLAVMSSADVYKGGGGGRYGGGRYGGGGGYGGGLGGGGLGGGGLGGGKGLGGGGLGGGGLGGGGLGGGGLGGGKGLGGGGLGGGGLGGGGLGGGGLGGGKGLGGGGLGGGGLGGGRGGGYGGGGGYGGGYGGGYGGGKYKG</sequence>
<comment type="function">
    <text evidence="2">Antimicrobial protein. Strong activity against the Gram-negative bacterium E.coli SBS363 and yeast C.albicans. No detectable activity against the Gram-positive bacterium M.luteus.</text>
</comment>
<comment type="subcellular location">
    <subcellularLocation>
        <location evidence="2">Secreted</location>
    </subcellularLocation>
</comment>
<comment type="tissue specificity">
    <text evidence="2">Expressed in hemocytes and secreted into the plasma following bacterial immune challenge.</text>
</comment>
<comment type="mass spectrometry" mass="10225.0" method="Electrospray" evidence="2"/>
<comment type="similarity">
    <text evidence="4">Belongs to the glycine-rich peptide family.</text>
</comment>
<protein>
    <recommendedName>
        <fullName evidence="3">Acanthoscurrin-1</fullName>
    </recommendedName>
</protein>